<gene>
    <name evidence="1" type="primary">rpsG</name>
    <name type="ordered locus">SP70585_0330</name>
</gene>
<reference key="1">
    <citation type="journal article" date="2010" name="Genome Biol.">
        <title>Structure and dynamics of the pan-genome of Streptococcus pneumoniae and closely related species.</title>
        <authorList>
            <person name="Donati C."/>
            <person name="Hiller N.L."/>
            <person name="Tettelin H."/>
            <person name="Muzzi A."/>
            <person name="Croucher N.J."/>
            <person name="Angiuoli S.V."/>
            <person name="Oggioni M."/>
            <person name="Dunning Hotopp J.C."/>
            <person name="Hu F.Z."/>
            <person name="Riley D.R."/>
            <person name="Covacci A."/>
            <person name="Mitchell T.J."/>
            <person name="Bentley S.D."/>
            <person name="Kilian M."/>
            <person name="Ehrlich G.D."/>
            <person name="Rappuoli R."/>
            <person name="Moxon E.R."/>
            <person name="Masignani V."/>
        </authorList>
    </citation>
    <scope>NUCLEOTIDE SEQUENCE [LARGE SCALE GENOMIC DNA]</scope>
    <source>
        <strain>70585</strain>
    </source>
</reference>
<protein>
    <recommendedName>
        <fullName evidence="1">Small ribosomal subunit protein uS7</fullName>
    </recommendedName>
    <alternativeName>
        <fullName evidence="2">30S ribosomal protein S7</fullName>
    </alternativeName>
</protein>
<dbReference type="EMBL" id="CP000918">
    <property type="protein sequence ID" value="ACO17596.1"/>
    <property type="molecule type" value="Genomic_DNA"/>
</dbReference>
<dbReference type="RefSeq" id="WP_000087873.1">
    <property type="nucleotide sequence ID" value="NC_012468.1"/>
</dbReference>
<dbReference type="SMR" id="C1CB45"/>
<dbReference type="GeneID" id="93738576"/>
<dbReference type="KEGG" id="snm:SP70585_0330"/>
<dbReference type="HOGENOM" id="CLU_072226_1_1_9"/>
<dbReference type="Proteomes" id="UP000002211">
    <property type="component" value="Chromosome"/>
</dbReference>
<dbReference type="GO" id="GO:0015935">
    <property type="term" value="C:small ribosomal subunit"/>
    <property type="evidence" value="ECO:0007669"/>
    <property type="project" value="InterPro"/>
</dbReference>
<dbReference type="GO" id="GO:0019843">
    <property type="term" value="F:rRNA binding"/>
    <property type="evidence" value="ECO:0007669"/>
    <property type="project" value="UniProtKB-UniRule"/>
</dbReference>
<dbReference type="GO" id="GO:0003735">
    <property type="term" value="F:structural constituent of ribosome"/>
    <property type="evidence" value="ECO:0007669"/>
    <property type="project" value="InterPro"/>
</dbReference>
<dbReference type="GO" id="GO:0000049">
    <property type="term" value="F:tRNA binding"/>
    <property type="evidence" value="ECO:0007669"/>
    <property type="project" value="UniProtKB-UniRule"/>
</dbReference>
<dbReference type="GO" id="GO:0006412">
    <property type="term" value="P:translation"/>
    <property type="evidence" value="ECO:0007669"/>
    <property type="project" value="UniProtKB-UniRule"/>
</dbReference>
<dbReference type="CDD" id="cd14869">
    <property type="entry name" value="uS7_Bacteria"/>
    <property type="match status" value="1"/>
</dbReference>
<dbReference type="FunFam" id="1.10.455.10:FF:000001">
    <property type="entry name" value="30S ribosomal protein S7"/>
    <property type="match status" value="1"/>
</dbReference>
<dbReference type="Gene3D" id="1.10.455.10">
    <property type="entry name" value="Ribosomal protein S7 domain"/>
    <property type="match status" value="1"/>
</dbReference>
<dbReference type="HAMAP" id="MF_00480_B">
    <property type="entry name" value="Ribosomal_uS7_B"/>
    <property type="match status" value="1"/>
</dbReference>
<dbReference type="InterPro" id="IPR000235">
    <property type="entry name" value="Ribosomal_uS7"/>
</dbReference>
<dbReference type="InterPro" id="IPR005717">
    <property type="entry name" value="Ribosomal_uS7_bac/org-type"/>
</dbReference>
<dbReference type="InterPro" id="IPR020606">
    <property type="entry name" value="Ribosomal_uS7_CS"/>
</dbReference>
<dbReference type="InterPro" id="IPR023798">
    <property type="entry name" value="Ribosomal_uS7_dom"/>
</dbReference>
<dbReference type="InterPro" id="IPR036823">
    <property type="entry name" value="Ribosomal_uS7_dom_sf"/>
</dbReference>
<dbReference type="NCBIfam" id="TIGR01029">
    <property type="entry name" value="rpsG_bact"/>
    <property type="match status" value="1"/>
</dbReference>
<dbReference type="PANTHER" id="PTHR11205">
    <property type="entry name" value="RIBOSOMAL PROTEIN S7"/>
    <property type="match status" value="1"/>
</dbReference>
<dbReference type="Pfam" id="PF00177">
    <property type="entry name" value="Ribosomal_S7"/>
    <property type="match status" value="1"/>
</dbReference>
<dbReference type="PIRSF" id="PIRSF002122">
    <property type="entry name" value="RPS7p_RPS7a_RPS5e_RPS7o"/>
    <property type="match status" value="1"/>
</dbReference>
<dbReference type="SUPFAM" id="SSF47973">
    <property type="entry name" value="Ribosomal protein S7"/>
    <property type="match status" value="1"/>
</dbReference>
<dbReference type="PROSITE" id="PS00052">
    <property type="entry name" value="RIBOSOMAL_S7"/>
    <property type="match status" value="1"/>
</dbReference>
<evidence type="ECO:0000255" key="1">
    <source>
        <dbReference type="HAMAP-Rule" id="MF_00480"/>
    </source>
</evidence>
<evidence type="ECO:0000305" key="2"/>
<proteinExistence type="inferred from homology"/>
<keyword id="KW-0687">Ribonucleoprotein</keyword>
<keyword id="KW-0689">Ribosomal protein</keyword>
<keyword id="KW-0694">RNA-binding</keyword>
<keyword id="KW-0699">rRNA-binding</keyword>
<keyword id="KW-0820">tRNA-binding</keyword>
<accession>C1CB45</accession>
<comment type="function">
    <text evidence="1">One of the primary rRNA binding proteins, it binds directly to 16S rRNA where it nucleates assembly of the head domain of the 30S subunit. Is located at the subunit interface close to the decoding center, probably blocks exit of the E-site tRNA.</text>
</comment>
<comment type="subunit">
    <text evidence="1">Part of the 30S ribosomal subunit. Contacts proteins S9 and S11.</text>
</comment>
<comment type="similarity">
    <text evidence="1">Belongs to the universal ribosomal protein uS7 family.</text>
</comment>
<name>RS7_STRP7</name>
<sequence>MSRKNRAPKRDVLPDPLYNSQLVTRLINRVMLDGKRGTAASIVYGAFEQIKEATGNDALEVFETAMENIMPVLEVRARRVGGSNYQVPVEVRPERRTTLGLRWLVTIARLRGEHTMQDRLAKEILDAANNTGAAVKKREDTHRMAEANRAFAHFRW</sequence>
<organism>
    <name type="scientific">Streptococcus pneumoniae (strain 70585)</name>
    <dbReference type="NCBI Taxonomy" id="488221"/>
    <lineage>
        <taxon>Bacteria</taxon>
        <taxon>Bacillati</taxon>
        <taxon>Bacillota</taxon>
        <taxon>Bacilli</taxon>
        <taxon>Lactobacillales</taxon>
        <taxon>Streptococcaceae</taxon>
        <taxon>Streptococcus</taxon>
    </lineage>
</organism>
<feature type="chain" id="PRO_1000135625" description="Small ribosomal subunit protein uS7">
    <location>
        <begin position="1"/>
        <end position="156"/>
    </location>
</feature>